<comment type="subcellular location">
    <subcellularLocation>
        <location>Mitochondrion</location>
    </subcellularLocation>
    <subcellularLocation>
        <location evidence="1">Membrane</location>
        <topology evidence="1">Single-pass membrane protein</topology>
    </subcellularLocation>
</comment>
<comment type="similarity">
    <text evidence="4">Belongs to the LCL3 family.</text>
</comment>
<gene>
    <name type="primary">LCL3</name>
    <name type="ORF">SCRG_01084</name>
</gene>
<protein>
    <recommendedName>
        <fullName>Probable endonuclease LCL3</fullName>
        <ecNumber>3.1.-.-</ecNumber>
    </recommendedName>
</protein>
<sequence>MREGDSNSKKSADVAVLSIILTGSTLTLIYTYKRYLTQFKRTNDIPRRIFRKHWLYGKVTSVGDGDNFHFFHMPGGIRGGWGWLRPVPQMIKNDSTAEKLVGDSRNMRFFNFNWITHGRSTKSKIQKAKSQFLKLNVPYKNRKNLPTIPIRLCGIDAPERAHFGNPAQPFGNEALIWLQNRILGKKVWVKPLSIDQYNRCVARVSYWDWFGGWKDLSLEMLKDGLAVVYEGKVNTEFDDREDKYRYYEFLARSRKKGLWIQNKFETPGEYKKRI</sequence>
<name>LCL3_YEAS1</name>
<reference key="1">
    <citation type="submission" date="2005-03" db="EMBL/GenBank/DDBJ databases">
        <title>Annotation of the Saccharomyces cerevisiae RM11-1a genome.</title>
        <authorList>
            <consortium name="The Broad Institute Genome Sequencing Platform"/>
            <person name="Birren B.W."/>
            <person name="Lander E.S."/>
            <person name="Galagan J.E."/>
            <person name="Nusbaum C."/>
            <person name="Devon K."/>
            <person name="Cuomo C."/>
            <person name="Jaffe D.B."/>
            <person name="Butler J."/>
            <person name="Alvarez P."/>
            <person name="Gnerre S."/>
            <person name="Grabherr M."/>
            <person name="Kleber M."/>
            <person name="Mauceli E.W."/>
            <person name="Brockman W."/>
            <person name="MacCallum I.A."/>
            <person name="Rounsley S."/>
            <person name="Young S.K."/>
            <person name="LaButti K."/>
            <person name="Pushparaj V."/>
            <person name="DeCaprio D."/>
            <person name="Crawford M."/>
            <person name="Koehrsen M."/>
            <person name="Engels R."/>
            <person name="Montgomery P."/>
            <person name="Pearson M."/>
            <person name="Howarth C."/>
            <person name="Larson L."/>
            <person name="Luoma S."/>
            <person name="White J."/>
            <person name="O'Leary S."/>
            <person name="Kodira C.D."/>
            <person name="Zeng Q."/>
            <person name="Yandava C."/>
            <person name="Alvarado L."/>
            <person name="Pratt S."/>
            <person name="Kruglyak L."/>
        </authorList>
    </citation>
    <scope>NUCLEOTIDE SEQUENCE [LARGE SCALE GENOMIC DNA]</scope>
    <source>
        <strain>RM11-1a</strain>
    </source>
</reference>
<keyword id="KW-0106">Calcium</keyword>
<keyword id="KW-0255">Endonuclease</keyword>
<keyword id="KW-0378">Hydrolase</keyword>
<keyword id="KW-0472">Membrane</keyword>
<keyword id="KW-0479">Metal-binding</keyword>
<keyword id="KW-0496">Mitochondrion</keyword>
<keyword id="KW-0540">Nuclease</keyword>
<keyword id="KW-0812">Transmembrane</keyword>
<keyword id="KW-1133">Transmembrane helix</keyword>
<proteinExistence type="inferred from homology"/>
<evidence type="ECO:0000250" key="1"/>
<evidence type="ECO:0000255" key="2"/>
<evidence type="ECO:0000255" key="3">
    <source>
        <dbReference type="PROSITE-ProRule" id="PRU00272"/>
    </source>
</evidence>
<evidence type="ECO:0000305" key="4"/>
<organism>
    <name type="scientific">Saccharomyces cerevisiae (strain RM11-1a)</name>
    <name type="common">Baker's yeast</name>
    <dbReference type="NCBI Taxonomy" id="285006"/>
    <lineage>
        <taxon>Eukaryota</taxon>
        <taxon>Fungi</taxon>
        <taxon>Dikarya</taxon>
        <taxon>Ascomycota</taxon>
        <taxon>Saccharomycotina</taxon>
        <taxon>Saccharomycetes</taxon>
        <taxon>Saccharomycetales</taxon>
        <taxon>Saccharomycetaceae</taxon>
        <taxon>Saccharomyces</taxon>
    </lineage>
</organism>
<dbReference type="EC" id="3.1.-.-"/>
<dbReference type="EMBL" id="CH408044">
    <property type="protein sequence ID" value="EDV10309.1"/>
    <property type="molecule type" value="Genomic_DNA"/>
</dbReference>
<dbReference type="HOGENOM" id="CLU_046484_0_1_1"/>
<dbReference type="OrthoDB" id="16780at4893"/>
<dbReference type="Proteomes" id="UP000008335">
    <property type="component" value="Unassembled WGS sequence"/>
</dbReference>
<dbReference type="GO" id="GO:0016020">
    <property type="term" value="C:membrane"/>
    <property type="evidence" value="ECO:0007669"/>
    <property type="project" value="UniProtKB-SubCell"/>
</dbReference>
<dbReference type="GO" id="GO:0005739">
    <property type="term" value="C:mitochondrion"/>
    <property type="evidence" value="ECO:0007669"/>
    <property type="project" value="UniProtKB-SubCell"/>
</dbReference>
<dbReference type="GO" id="GO:0004519">
    <property type="term" value="F:endonuclease activity"/>
    <property type="evidence" value="ECO:0007669"/>
    <property type="project" value="UniProtKB-KW"/>
</dbReference>
<dbReference type="GO" id="GO:0046872">
    <property type="term" value="F:metal ion binding"/>
    <property type="evidence" value="ECO:0007669"/>
    <property type="project" value="UniProtKB-KW"/>
</dbReference>
<dbReference type="Gene3D" id="2.40.50.90">
    <property type="match status" value="1"/>
</dbReference>
<dbReference type="InterPro" id="IPR035437">
    <property type="entry name" value="SNase_OB-fold_sf"/>
</dbReference>
<dbReference type="InterPro" id="IPR016071">
    <property type="entry name" value="Staphylococal_nuclease_OB-fold"/>
</dbReference>
<dbReference type="PANTHER" id="PTHR12302">
    <property type="entry name" value="EBNA2 BINDING PROTEIN P100"/>
    <property type="match status" value="1"/>
</dbReference>
<dbReference type="PANTHER" id="PTHR12302:SF3">
    <property type="entry name" value="SERINE_THREONINE-PROTEIN KINASE 31"/>
    <property type="match status" value="1"/>
</dbReference>
<dbReference type="Pfam" id="PF00565">
    <property type="entry name" value="SNase"/>
    <property type="match status" value="1"/>
</dbReference>
<dbReference type="SMART" id="SM00318">
    <property type="entry name" value="SNc"/>
    <property type="match status" value="1"/>
</dbReference>
<dbReference type="SUPFAM" id="SSF50199">
    <property type="entry name" value="Staphylococcal nuclease"/>
    <property type="match status" value="1"/>
</dbReference>
<dbReference type="PROSITE" id="PS50830">
    <property type="entry name" value="TNASE_3"/>
    <property type="match status" value="1"/>
</dbReference>
<accession>B3LHF1</accession>
<feature type="chain" id="PRO_0000408688" description="Probable endonuclease LCL3">
    <location>
        <begin position="1"/>
        <end position="274"/>
    </location>
</feature>
<feature type="transmembrane region" description="Helical" evidence="2">
    <location>
        <begin position="15"/>
        <end position="32"/>
    </location>
</feature>
<feature type="domain" description="TNase-like" evidence="3">
    <location>
        <begin position="53"/>
        <end position="261"/>
    </location>
</feature>
<feature type="active site" evidence="3">
    <location>
        <position position="151"/>
    </location>
</feature>
<feature type="active site" evidence="3">
    <location>
        <position position="159"/>
    </location>
</feature>
<feature type="active site" evidence="3">
    <location>
        <position position="199"/>
    </location>
</feature>
<feature type="binding site" evidence="3">
    <location>
        <position position="156"/>
    </location>
    <ligand>
        <name>Ca(2+)</name>
        <dbReference type="ChEBI" id="CHEBI:29108"/>
    </ligand>
</feature>